<organism>
    <name type="scientific">Agrostis stolonifera</name>
    <name type="common">Creeping bentgrass</name>
    <dbReference type="NCBI Taxonomy" id="63632"/>
    <lineage>
        <taxon>Eukaryota</taxon>
        <taxon>Viridiplantae</taxon>
        <taxon>Streptophyta</taxon>
        <taxon>Embryophyta</taxon>
        <taxon>Tracheophyta</taxon>
        <taxon>Spermatophyta</taxon>
        <taxon>Magnoliopsida</taxon>
        <taxon>Liliopsida</taxon>
        <taxon>Poales</taxon>
        <taxon>Poaceae</taxon>
        <taxon>BOP clade</taxon>
        <taxon>Pooideae</taxon>
        <taxon>Poodae</taxon>
        <taxon>Poeae</taxon>
        <taxon>Poeae Chloroplast Group 1 (Aveneae type)</taxon>
        <taxon>Agrostidodinae</taxon>
        <taxon>Agrostidinae</taxon>
        <taxon>Agrostis</taxon>
    </lineage>
</organism>
<feature type="chain" id="PRO_0000275543" description="Cytochrome b6-f complex subunit 8">
    <location>
        <begin position="1"/>
        <end position="29"/>
    </location>
</feature>
<feature type="transmembrane region" description="Helical" evidence="1">
    <location>
        <begin position="3"/>
        <end position="23"/>
    </location>
</feature>
<name>PETN_AGRST</name>
<protein>
    <recommendedName>
        <fullName evidence="1">Cytochrome b6-f complex subunit 8</fullName>
    </recommendedName>
    <alternativeName>
        <fullName evidence="1">Cytochrome b6-f complex subunit PetN</fullName>
    </alternativeName>
    <alternativeName>
        <fullName evidence="1">Cytochrome b6-f complex subunit VIII</fullName>
    </alternativeName>
</protein>
<evidence type="ECO:0000255" key="1">
    <source>
        <dbReference type="HAMAP-Rule" id="MF_00395"/>
    </source>
</evidence>
<keyword id="KW-0150">Chloroplast</keyword>
<keyword id="KW-0249">Electron transport</keyword>
<keyword id="KW-0472">Membrane</keyword>
<keyword id="KW-0602">Photosynthesis</keyword>
<keyword id="KW-0934">Plastid</keyword>
<keyword id="KW-0793">Thylakoid</keyword>
<keyword id="KW-0812">Transmembrane</keyword>
<keyword id="KW-1133">Transmembrane helix</keyword>
<keyword id="KW-0813">Transport</keyword>
<reference key="1">
    <citation type="journal article" date="2007" name="Theor. Appl. Genet.">
        <title>Complete chloroplast genome sequences of Hordeum vulgare, Sorghum bicolor and Agrostis stolonifera, and comparative analyses with other grass genomes.</title>
        <authorList>
            <person name="Saski C."/>
            <person name="Lee S.-B."/>
            <person name="Fjellheim S."/>
            <person name="Guda C."/>
            <person name="Jansen R.K."/>
            <person name="Luo H."/>
            <person name="Tomkins J."/>
            <person name="Rognli O.A."/>
            <person name="Daniell H."/>
            <person name="Clarke J.L."/>
        </authorList>
    </citation>
    <scope>NUCLEOTIDE SEQUENCE [LARGE SCALE GENOMIC DNA]</scope>
    <source>
        <strain>cv. Penn A-4</strain>
    </source>
</reference>
<accession>A1E9Z7</accession>
<gene>
    <name evidence="1" type="primary">petN</name>
</gene>
<proteinExistence type="inferred from homology"/>
<sequence>MDIVSLAWAALMVVFTFSLSLVVWGRSGL</sequence>
<dbReference type="EMBL" id="EF115543">
    <property type="protein sequence ID" value="ABK79569.1"/>
    <property type="molecule type" value="Genomic_DNA"/>
</dbReference>
<dbReference type="RefSeq" id="YP_874725.1">
    <property type="nucleotide sequence ID" value="NC_008591.1"/>
</dbReference>
<dbReference type="SMR" id="A1E9Z7"/>
<dbReference type="GeneID" id="4524942"/>
<dbReference type="GO" id="GO:0009535">
    <property type="term" value="C:chloroplast thylakoid membrane"/>
    <property type="evidence" value="ECO:0007669"/>
    <property type="project" value="UniProtKB-SubCell"/>
</dbReference>
<dbReference type="GO" id="GO:0009512">
    <property type="term" value="C:cytochrome b6f complex"/>
    <property type="evidence" value="ECO:0007669"/>
    <property type="project" value="InterPro"/>
</dbReference>
<dbReference type="GO" id="GO:0045158">
    <property type="term" value="F:electron transporter, transferring electrons within cytochrome b6/f complex of photosystem II activity"/>
    <property type="evidence" value="ECO:0007669"/>
    <property type="project" value="InterPro"/>
</dbReference>
<dbReference type="GO" id="GO:0017004">
    <property type="term" value="P:cytochrome complex assembly"/>
    <property type="evidence" value="ECO:0007669"/>
    <property type="project" value="UniProtKB-UniRule"/>
</dbReference>
<dbReference type="GO" id="GO:0015979">
    <property type="term" value="P:photosynthesis"/>
    <property type="evidence" value="ECO:0007669"/>
    <property type="project" value="UniProtKB-KW"/>
</dbReference>
<dbReference type="HAMAP" id="MF_00395">
    <property type="entry name" value="Cytb6_f_PetN"/>
    <property type="match status" value="1"/>
</dbReference>
<dbReference type="InterPro" id="IPR036143">
    <property type="entry name" value="Cytochr_b6-f_cplx_su8_sf"/>
</dbReference>
<dbReference type="InterPro" id="IPR005497">
    <property type="entry name" value="Cytochrome_b6-f_cplx_su8"/>
</dbReference>
<dbReference type="Pfam" id="PF03742">
    <property type="entry name" value="PetN"/>
    <property type="match status" value="1"/>
</dbReference>
<dbReference type="SUPFAM" id="SSF103451">
    <property type="entry name" value="PetN subunit of the cytochrome b6f complex"/>
    <property type="match status" value="1"/>
</dbReference>
<geneLocation type="chloroplast"/>
<comment type="function">
    <text evidence="1">Component of the cytochrome b6-f complex, which mediates electron transfer between photosystem II (PSII) and photosystem I (PSI), cyclic electron flow around PSI, and state transitions.</text>
</comment>
<comment type="subunit">
    <text evidence="1">The 4 large subunits of the cytochrome b6-f complex are cytochrome b6, subunit IV (17 kDa polypeptide, PetD), cytochrome f and the Rieske protein, while the 4 small subunits are PetG, PetL, PetM and PetN. The complex functions as a dimer.</text>
</comment>
<comment type="subcellular location">
    <subcellularLocation>
        <location>Plastid</location>
        <location>Chloroplast thylakoid membrane</location>
        <topology>Single-pass membrane protein</topology>
    </subcellularLocation>
</comment>
<comment type="similarity">
    <text evidence="1">Belongs to the PetN family.</text>
</comment>